<accession>A7ZKM3</accession>
<proteinExistence type="inferred from homology"/>
<reference key="1">
    <citation type="journal article" date="2008" name="J. Bacteriol.">
        <title>The pangenome structure of Escherichia coli: comparative genomic analysis of E. coli commensal and pathogenic isolates.</title>
        <authorList>
            <person name="Rasko D.A."/>
            <person name="Rosovitz M.J."/>
            <person name="Myers G.S.A."/>
            <person name="Mongodin E.F."/>
            <person name="Fricke W.F."/>
            <person name="Gajer P."/>
            <person name="Crabtree J."/>
            <person name="Sebaihia M."/>
            <person name="Thomson N.R."/>
            <person name="Chaudhuri R."/>
            <person name="Henderson I.R."/>
            <person name="Sperandio V."/>
            <person name="Ravel J."/>
        </authorList>
    </citation>
    <scope>NUCLEOTIDE SEQUENCE [LARGE SCALE GENOMIC DNA]</scope>
    <source>
        <strain>E24377A / ETEC</strain>
    </source>
</reference>
<comment type="function">
    <text evidence="1">Catalyzes the phosphorylation of N-acetyl-D-glucosamine (GlcNAc) derived from cell-wall degradation, yielding GlcNAc-6-P.</text>
</comment>
<comment type="catalytic activity">
    <reaction evidence="1">
        <text>N-acetyl-D-glucosamine + ATP = N-acetyl-D-glucosamine 6-phosphate + ADP + H(+)</text>
        <dbReference type="Rhea" id="RHEA:17417"/>
        <dbReference type="ChEBI" id="CHEBI:15378"/>
        <dbReference type="ChEBI" id="CHEBI:30616"/>
        <dbReference type="ChEBI" id="CHEBI:57513"/>
        <dbReference type="ChEBI" id="CHEBI:456216"/>
        <dbReference type="ChEBI" id="CHEBI:506227"/>
        <dbReference type="EC" id="2.7.1.59"/>
    </reaction>
</comment>
<comment type="pathway">
    <text evidence="1">Cell wall biogenesis; peptidoglycan recycling.</text>
</comment>
<comment type="similarity">
    <text evidence="1">Belongs to the ROK (NagC/XylR) family. NagK subfamily.</text>
</comment>
<dbReference type="EC" id="2.7.1.59" evidence="1"/>
<dbReference type="EMBL" id="CP000800">
    <property type="protein sequence ID" value="ABV20144.1"/>
    <property type="molecule type" value="Genomic_DNA"/>
</dbReference>
<dbReference type="RefSeq" id="WP_000291287.1">
    <property type="nucleotide sequence ID" value="NC_009801.1"/>
</dbReference>
<dbReference type="SMR" id="A7ZKM3"/>
<dbReference type="KEGG" id="ecw:EcE24377A_1241"/>
<dbReference type="HOGENOM" id="CLU_036604_0_3_6"/>
<dbReference type="UniPathway" id="UPA00544"/>
<dbReference type="Proteomes" id="UP000001122">
    <property type="component" value="Chromosome"/>
</dbReference>
<dbReference type="GO" id="GO:0005524">
    <property type="term" value="F:ATP binding"/>
    <property type="evidence" value="ECO:0007669"/>
    <property type="project" value="UniProtKB-UniRule"/>
</dbReference>
<dbReference type="GO" id="GO:0045127">
    <property type="term" value="F:N-acetylglucosamine kinase activity"/>
    <property type="evidence" value="ECO:0007669"/>
    <property type="project" value="UniProtKB-UniRule"/>
</dbReference>
<dbReference type="GO" id="GO:0008270">
    <property type="term" value="F:zinc ion binding"/>
    <property type="evidence" value="ECO:0007669"/>
    <property type="project" value="UniProtKB-UniRule"/>
</dbReference>
<dbReference type="GO" id="GO:0006044">
    <property type="term" value="P:N-acetylglucosamine metabolic process"/>
    <property type="evidence" value="ECO:0007669"/>
    <property type="project" value="UniProtKB-UniRule"/>
</dbReference>
<dbReference type="GO" id="GO:0009254">
    <property type="term" value="P:peptidoglycan turnover"/>
    <property type="evidence" value="ECO:0007669"/>
    <property type="project" value="UniProtKB-UniRule"/>
</dbReference>
<dbReference type="CDD" id="cd24057">
    <property type="entry name" value="ASKHA_NBD_ROK_NAGK"/>
    <property type="match status" value="1"/>
</dbReference>
<dbReference type="FunFam" id="3.30.420.40:FF:000049">
    <property type="entry name" value="N-acetyl-D-glucosamine kinase"/>
    <property type="match status" value="1"/>
</dbReference>
<dbReference type="FunFam" id="3.30.420.40:FF:000051">
    <property type="entry name" value="N-acetyl-D-glucosamine kinase"/>
    <property type="match status" value="1"/>
</dbReference>
<dbReference type="Gene3D" id="3.30.420.40">
    <property type="match status" value="2"/>
</dbReference>
<dbReference type="HAMAP" id="MF_01271">
    <property type="entry name" value="GlcNAc_kinase"/>
    <property type="match status" value="1"/>
</dbReference>
<dbReference type="InterPro" id="IPR043129">
    <property type="entry name" value="ATPase_NBD"/>
</dbReference>
<dbReference type="InterPro" id="IPR023505">
    <property type="entry name" value="N-acetyl-D-glucosamine_kinase"/>
</dbReference>
<dbReference type="InterPro" id="IPR000600">
    <property type="entry name" value="ROK"/>
</dbReference>
<dbReference type="InterPro" id="IPR049874">
    <property type="entry name" value="ROK_cs"/>
</dbReference>
<dbReference type="NCBIfam" id="NF009835">
    <property type="entry name" value="PRK13310.1"/>
    <property type="match status" value="1"/>
</dbReference>
<dbReference type="PANTHER" id="PTHR18964:SF162">
    <property type="entry name" value="N-ACETYL-D-GLUCOSAMINE KINASE"/>
    <property type="match status" value="1"/>
</dbReference>
<dbReference type="PANTHER" id="PTHR18964">
    <property type="entry name" value="ROK (REPRESSOR, ORF, KINASE) FAMILY"/>
    <property type="match status" value="1"/>
</dbReference>
<dbReference type="Pfam" id="PF00480">
    <property type="entry name" value="ROK"/>
    <property type="match status" value="1"/>
</dbReference>
<dbReference type="SUPFAM" id="SSF53067">
    <property type="entry name" value="Actin-like ATPase domain"/>
    <property type="match status" value="1"/>
</dbReference>
<dbReference type="PROSITE" id="PS01125">
    <property type="entry name" value="ROK"/>
    <property type="match status" value="1"/>
</dbReference>
<evidence type="ECO:0000255" key="1">
    <source>
        <dbReference type="HAMAP-Rule" id="MF_01271"/>
    </source>
</evidence>
<keyword id="KW-0067">ATP-binding</keyword>
<keyword id="KW-0119">Carbohydrate metabolism</keyword>
<keyword id="KW-0418">Kinase</keyword>
<keyword id="KW-0479">Metal-binding</keyword>
<keyword id="KW-0547">Nucleotide-binding</keyword>
<keyword id="KW-1185">Reference proteome</keyword>
<keyword id="KW-0808">Transferase</keyword>
<keyword id="KW-0862">Zinc</keyword>
<protein>
    <recommendedName>
        <fullName evidence="1">N-acetyl-D-glucosamine kinase</fullName>
        <ecNumber evidence="1">2.7.1.59</ecNumber>
    </recommendedName>
    <alternativeName>
        <fullName evidence="1">GlcNAc kinase</fullName>
    </alternativeName>
</protein>
<organism>
    <name type="scientific">Escherichia coli O139:H28 (strain E24377A / ETEC)</name>
    <dbReference type="NCBI Taxonomy" id="331111"/>
    <lineage>
        <taxon>Bacteria</taxon>
        <taxon>Pseudomonadati</taxon>
        <taxon>Pseudomonadota</taxon>
        <taxon>Gammaproteobacteria</taxon>
        <taxon>Enterobacterales</taxon>
        <taxon>Enterobacteriaceae</taxon>
        <taxon>Escherichia</taxon>
    </lineage>
</organism>
<feature type="chain" id="PRO_1000067379" description="N-acetyl-D-glucosamine kinase">
    <location>
        <begin position="1"/>
        <end position="303"/>
    </location>
</feature>
<feature type="binding site" evidence="1">
    <location>
        <begin position="4"/>
        <end position="11"/>
    </location>
    <ligand>
        <name>ATP</name>
        <dbReference type="ChEBI" id="CHEBI:30616"/>
    </ligand>
</feature>
<feature type="binding site" evidence="1">
    <location>
        <begin position="133"/>
        <end position="140"/>
    </location>
    <ligand>
        <name>ATP</name>
        <dbReference type="ChEBI" id="CHEBI:30616"/>
    </ligand>
</feature>
<feature type="binding site" evidence="1">
    <location>
        <position position="157"/>
    </location>
    <ligand>
        <name>Zn(2+)</name>
        <dbReference type="ChEBI" id="CHEBI:29105"/>
    </ligand>
</feature>
<feature type="binding site" evidence="1">
    <location>
        <position position="177"/>
    </location>
    <ligand>
        <name>Zn(2+)</name>
        <dbReference type="ChEBI" id="CHEBI:29105"/>
    </ligand>
</feature>
<feature type="binding site" evidence="1">
    <location>
        <position position="179"/>
    </location>
    <ligand>
        <name>Zn(2+)</name>
        <dbReference type="ChEBI" id="CHEBI:29105"/>
    </ligand>
</feature>
<feature type="binding site" evidence="1">
    <location>
        <position position="184"/>
    </location>
    <ligand>
        <name>Zn(2+)</name>
        <dbReference type="ChEBI" id="CHEBI:29105"/>
    </ligand>
</feature>
<sequence>MYYGFDIGGTKIALGVFDSGRQLQWEKRVPTPRDSYDAFLDAVCELVAEADQRFGCKGSVGIGIPGMPETEDGTLYAANVPAASGQPLRADLSARLDRDVRLDNDANCFALSEAWDDEFTQYPLVMGLILGTGVGGGLIFNGKPITGKSYITGEFGHMRLPVDALTMMGLDFPLRRCGCGQHGCIENYLSGRGFAWLYQHYYHQPLQAPEIIALYDQGDEQARAHVERYLDLLAVCLGNILTIVDPDLVVIGGGLSNFPAITTQLADRLPRHLLPVARVPRIERARHGDAGGMRGAAFLHLTD</sequence>
<gene>
    <name evidence="1" type="primary">nagK</name>
    <name type="ordered locus">EcE24377A_1241</name>
</gene>
<name>NAGK_ECO24</name>